<name>PSBH_NEPOL</name>
<keyword id="KW-0150">Chloroplast</keyword>
<keyword id="KW-0472">Membrane</keyword>
<keyword id="KW-0597">Phosphoprotein</keyword>
<keyword id="KW-0602">Photosynthesis</keyword>
<keyword id="KW-0604">Photosystem II</keyword>
<keyword id="KW-0934">Plastid</keyword>
<keyword id="KW-0793">Thylakoid</keyword>
<keyword id="KW-0812">Transmembrane</keyword>
<keyword id="KW-1133">Transmembrane helix</keyword>
<geneLocation type="chloroplast"/>
<feature type="chain" id="PRO_0000070518" description="Photosystem II reaction center protein H">
    <location>
        <begin position="1"/>
        <end position="81"/>
    </location>
</feature>
<feature type="transmembrane region" description="Helical" evidence="1">
    <location>
        <begin position="43"/>
        <end position="63"/>
    </location>
</feature>
<feature type="modified residue" description="Phosphothreonine" evidence="2">
    <location>
        <position position="3"/>
    </location>
</feature>
<reference key="1">
    <citation type="journal article" date="1999" name="Proc. Natl. Acad. Sci. U.S.A.">
        <title>The complete chloroplast DNA sequence of the green alga Nephroselmis olivacea: insights into the architecture of ancestral chloroplast genomes.</title>
        <authorList>
            <person name="Turmel M."/>
            <person name="Otis C."/>
            <person name="Lemieux C."/>
        </authorList>
    </citation>
    <scope>NUCLEOTIDE SEQUENCE [LARGE SCALE GENOMIC DNA]</scope>
    <source>
        <strain>NIES-484 / S-N-5-8</strain>
    </source>
</reference>
<accession>Q9TKW7</accession>
<organism>
    <name type="scientific">Nephroselmis olivacea</name>
    <name type="common">Green alga</name>
    <dbReference type="NCBI Taxonomy" id="31312"/>
    <lineage>
        <taxon>Eukaryota</taxon>
        <taxon>Viridiplantae</taxon>
        <taxon>Chlorophyta</taxon>
        <taxon>Nephroselmidophyceae</taxon>
        <taxon>Nephroselmidales</taxon>
        <taxon>Nephroselmidaceae</taxon>
        <taxon>Nephroselmis</taxon>
    </lineage>
</organism>
<comment type="function">
    <text evidence="1">One of the components of the core complex of photosystem II (PSII), required for its stability and/or assembly. PSII is a light-driven water:plastoquinone oxidoreductase that uses light energy to abstract electrons from H(2)O, generating O(2) and a proton gradient subsequently used for ATP formation. It consists of a core antenna complex that captures photons, and an electron transfer chain that converts photonic excitation into a charge separation.</text>
</comment>
<comment type="subunit">
    <text evidence="1">PSII is composed of 1 copy each of membrane proteins PsbA, PsbB, PsbC, PsbD, PsbE, PsbF, PsbH, PsbI, PsbJ, PsbK, PsbL, PsbM, PsbT, PsbX, PsbY, PsbZ, Psb30/Ycf12, at least 3 peripheral proteins of the oxygen-evolving complex and a large number of cofactors. It forms dimeric complexes.</text>
</comment>
<comment type="subcellular location">
    <subcellularLocation>
        <location evidence="1">Plastid</location>
        <location evidence="1">Chloroplast thylakoid membrane</location>
        <topology evidence="1">Single-pass membrane protein</topology>
    </subcellularLocation>
</comment>
<comment type="PTM">
    <text evidence="2">Phosphorylation is a light-dependent reaction catalyzed by a membrane-bound kinase; phosphorylation occurs on Thr residue(s) in the N-terminus of the protein.</text>
</comment>
<comment type="similarity">
    <text evidence="1">Belongs to the PsbH family.</text>
</comment>
<sequence>MATGSTSKAKADESTSKITPLGTALKPLNSEYGKVAPGWGTTPVMGLFMALFAVFLLIILEIYNSSLILDDVGVSWYSLGK</sequence>
<proteinExistence type="inferred from homology"/>
<gene>
    <name evidence="1" type="primary">psbH</name>
</gene>
<evidence type="ECO:0000255" key="1">
    <source>
        <dbReference type="HAMAP-Rule" id="MF_00752"/>
    </source>
</evidence>
<evidence type="ECO:0000305" key="2"/>
<protein>
    <recommendedName>
        <fullName evidence="1">Photosystem II reaction center protein H</fullName>
        <shortName evidence="1">PSII-H</shortName>
    </recommendedName>
    <alternativeName>
        <fullName evidence="2">Photosystem II 10 kDa phosphoprotein</fullName>
    </alternativeName>
</protein>
<dbReference type="EMBL" id="AF137379">
    <property type="protein sequence ID" value="AAD54849.1"/>
    <property type="molecule type" value="Genomic_DNA"/>
</dbReference>
<dbReference type="RefSeq" id="NP_050878.1">
    <property type="nucleotide sequence ID" value="NC_000927.1"/>
</dbReference>
<dbReference type="SMR" id="Q9TKW7"/>
<dbReference type="GeneID" id="802032"/>
<dbReference type="GO" id="GO:0009535">
    <property type="term" value="C:chloroplast thylakoid membrane"/>
    <property type="evidence" value="ECO:0007669"/>
    <property type="project" value="UniProtKB-SubCell"/>
</dbReference>
<dbReference type="GO" id="GO:0009523">
    <property type="term" value="C:photosystem II"/>
    <property type="evidence" value="ECO:0007669"/>
    <property type="project" value="UniProtKB-KW"/>
</dbReference>
<dbReference type="GO" id="GO:0042301">
    <property type="term" value="F:phosphate ion binding"/>
    <property type="evidence" value="ECO:0007669"/>
    <property type="project" value="InterPro"/>
</dbReference>
<dbReference type="GO" id="GO:0015979">
    <property type="term" value="P:photosynthesis"/>
    <property type="evidence" value="ECO:0007669"/>
    <property type="project" value="UniProtKB-UniRule"/>
</dbReference>
<dbReference type="GO" id="GO:0050821">
    <property type="term" value="P:protein stabilization"/>
    <property type="evidence" value="ECO:0007669"/>
    <property type="project" value="InterPro"/>
</dbReference>
<dbReference type="Gene3D" id="1.20.5.880">
    <property type="entry name" value="Photosystem II reaction center protein H"/>
    <property type="match status" value="1"/>
</dbReference>
<dbReference type="HAMAP" id="MF_00752">
    <property type="entry name" value="PSII_PsbH"/>
    <property type="match status" value="1"/>
</dbReference>
<dbReference type="InterPro" id="IPR001056">
    <property type="entry name" value="PSII_PsbH"/>
</dbReference>
<dbReference type="InterPro" id="IPR036863">
    <property type="entry name" value="PSII_PsbH_sf"/>
</dbReference>
<dbReference type="NCBIfam" id="NF002728">
    <property type="entry name" value="PRK02624.1"/>
    <property type="match status" value="1"/>
</dbReference>
<dbReference type="PANTHER" id="PTHR34469">
    <property type="entry name" value="PHOTOSYSTEM II REACTION CENTER PROTEIN H"/>
    <property type="match status" value="1"/>
</dbReference>
<dbReference type="PANTHER" id="PTHR34469:SF4">
    <property type="entry name" value="PHOTOSYSTEM II REACTION CENTER PROTEIN H"/>
    <property type="match status" value="1"/>
</dbReference>
<dbReference type="Pfam" id="PF00737">
    <property type="entry name" value="PsbH"/>
    <property type="match status" value="1"/>
</dbReference>
<dbReference type="SUPFAM" id="SSF161025">
    <property type="entry name" value="Photosystem II 10 kDa phosphoprotein PsbH"/>
    <property type="match status" value="1"/>
</dbReference>